<protein>
    <recommendedName>
        <fullName evidence="1">Large ribosomal subunit protein bL21</fullName>
    </recommendedName>
    <alternativeName>
        <fullName evidence="2">50S ribosomal protein L21</fullName>
    </alternativeName>
</protein>
<organism>
    <name type="scientific">Borrelia garinii subsp. bavariensis (strain ATCC BAA-2496 / DSM 23469 / PBi)</name>
    <name type="common">Borreliella bavariensis</name>
    <dbReference type="NCBI Taxonomy" id="290434"/>
    <lineage>
        <taxon>Bacteria</taxon>
        <taxon>Pseudomonadati</taxon>
        <taxon>Spirochaetota</taxon>
        <taxon>Spirochaetia</taxon>
        <taxon>Spirochaetales</taxon>
        <taxon>Borreliaceae</taxon>
        <taxon>Borreliella</taxon>
    </lineage>
</organism>
<sequence>MYALVEINGKQYKAIEGEFLKIDKISPIEKDKLEFNSVLLINKDGEIKIGKPYVANSLIRCTYKEDKKDKKVVSYRYRRRKSSERKVGHRQTYSYILVDEIVF</sequence>
<keyword id="KW-0687">Ribonucleoprotein</keyword>
<keyword id="KW-0689">Ribosomal protein</keyword>
<keyword id="KW-0694">RNA-binding</keyword>
<keyword id="KW-0699">rRNA-binding</keyword>
<gene>
    <name evidence="1" type="primary">rplU</name>
    <name type="ordered locus">BG0802</name>
</gene>
<accession>Q65ZZ6</accession>
<reference key="1">
    <citation type="journal article" date="2004" name="Nucleic Acids Res.">
        <title>Comparative analysis of the Borrelia garinii genome.</title>
        <authorList>
            <person name="Gloeckner G."/>
            <person name="Lehmann R."/>
            <person name="Romualdi A."/>
            <person name="Pradella S."/>
            <person name="Schulte-Spechtel U."/>
            <person name="Schilhabel M."/>
            <person name="Wilske B."/>
            <person name="Suehnel J."/>
            <person name="Platzer M."/>
        </authorList>
    </citation>
    <scope>NUCLEOTIDE SEQUENCE [LARGE SCALE GENOMIC DNA]</scope>
    <source>
        <strain>ATCC BAA-2496 / DSM 23469 / PBi</strain>
    </source>
</reference>
<dbReference type="EMBL" id="CP000013">
    <property type="protein sequence ID" value="AAU07625.1"/>
    <property type="molecule type" value="Genomic_DNA"/>
</dbReference>
<dbReference type="RefSeq" id="WP_004791246.1">
    <property type="nucleotide sequence ID" value="NZ_CP028872.1"/>
</dbReference>
<dbReference type="SMR" id="Q65ZZ6"/>
<dbReference type="GeneID" id="83866260"/>
<dbReference type="KEGG" id="bga:BG0802"/>
<dbReference type="eggNOG" id="COG0261">
    <property type="taxonomic scope" value="Bacteria"/>
</dbReference>
<dbReference type="HOGENOM" id="CLU_061463_3_2_12"/>
<dbReference type="OrthoDB" id="9813334at2"/>
<dbReference type="Proteomes" id="UP000002276">
    <property type="component" value="Chromosome"/>
</dbReference>
<dbReference type="GO" id="GO:0005737">
    <property type="term" value="C:cytoplasm"/>
    <property type="evidence" value="ECO:0007669"/>
    <property type="project" value="UniProtKB-ARBA"/>
</dbReference>
<dbReference type="GO" id="GO:1990904">
    <property type="term" value="C:ribonucleoprotein complex"/>
    <property type="evidence" value="ECO:0007669"/>
    <property type="project" value="UniProtKB-KW"/>
</dbReference>
<dbReference type="GO" id="GO:0005840">
    <property type="term" value="C:ribosome"/>
    <property type="evidence" value="ECO:0007669"/>
    <property type="project" value="UniProtKB-KW"/>
</dbReference>
<dbReference type="GO" id="GO:0019843">
    <property type="term" value="F:rRNA binding"/>
    <property type="evidence" value="ECO:0007669"/>
    <property type="project" value="UniProtKB-UniRule"/>
</dbReference>
<dbReference type="GO" id="GO:0003735">
    <property type="term" value="F:structural constituent of ribosome"/>
    <property type="evidence" value="ECO:0007669"/>
    <property type="project" value="InterPro"/>
</dbReference>
<dbReference type="GO" id="GO:0006412">
    <property type="term" value="P:translation"/>
    <property type="evidence" value="ECO:0007669"/>
    <property type="project" value="UniProtKB-UniRule"/>
</dbReference>
<dbReference type="HAMAP" id="MF_01363">
    <property type="entry name" value="Ribosomal_bL21"/>
    <property type="match status" value="1"/>
</dbReference>
<dbReference type="InterPro" id="IPR028909">
    <property type="entry name" value="bL21-like"/>
</dbReference>
<dbReference type="InterPro" id="IPR036164">
    <property type="entry name" value="bL21-like_sf"/>
</dbReference>
<dbReference type="InterPro" id="IPR001787">
    <property type="entry name" value="Ribosomal_bL21"/>
</dbReference>
<dbReference type="InterPro" id="IPR018258">
    <property type="entry name" value="Ribosomal_bL21_CS"/>
</dbReference>
<dbReference type="NCBIfam" id="TIGR00061">
    <property type="entry name" value="L21"/>
    <property type="match status" value="1"/>
</dbReference>
<dbReference type="PANTHER" id="PTHR21349">
    <property type="entry name" value="50S RIBOSOMAL PROTEIN L21"/>
    <property type="match status" value="1"/>
</dbReference>
<dbReference type="PANTHER" id="PTHR21349:SF0">
    <property type="entry name" value="LARGE RIBOSOMAL SUBUNIT PROTEIN BL21M"/>
    <property type="match status" value="1"/>
</dbReference>
<dbReference type="Pfam" id="PF00829">
    <property type="entry name" value="Ribosomal_L21p"/>
    <property type="match status" value="1"/>
</dbReference>
<dbReference type="SUPFAM" id="SSF141091">
    <property type="entry name" value="L21p-like"/>
    <property type="match status" value="1"/>
</dbReference>
<dbReference type="PROSITE" id="PS01169">
    <property type="entry name" value="RIBOSOMAL_L21"/>
    <property type="match status" value="1"/>
</dbReference>
<name>RL21_BORGP</name>
<proteinExistence type="inferred from homology"/>
<evidence type="ECO:0000255" key="1">
    <source>
        <dbReference type="HAMAP-Rule" id="MF_01363"/>
    </source>
</evidence>
<evidence type="ECO:0000305" key="2"/>
<feature type="chain" id="PRO_0000270643" description="Large ribosomal subunit protein bL21">
    <location>
        <begin position="1"/>
        <end position="103"/>
    </location>
</feature>
<comment type="function">
    <text evidence="1">This protein binds to 23S rRNA in the presence of protein L20.</text>
</comment>
<comment type="subunit">
    <text evidence="1">Part of the 50S ribosomal subunit. Contacts protein L20.</text>
</comment>
<comment type="similarity">
    <text evidence="1">Belongs to the bacterial ribosomal protein bL21 family.</text>
</comment>